<protein>
    <recommendedName>
        <fullName evidence="1">Small ribosomal subunit protein bS20</fullName>
    </recommendedName>
    <alternativeName>
        <fullName evidence="3">30S ribosomal protein S20</fullName>
    </alternativeName>
</protein>
<keyword id="KW-1185">Reference proteome</keyword>
<keyword id="KW-0687">Ribonucleoprotein</keyword>
<keyword id="KW-0689">Ribosomal protein</keyword>
<keyword id="KW-0694">RNA-binding</keyword>
<keyword id="KW-0699">rRNA-binding</keyword>
<gene>
    <name evidence="1" type="primary">rpsT</name>
    <name type="ordered locus">PMI0013</name>
</gene>
<comment type="function">
    <text evidence="1">Binds directly to 16S ribosomal RNA.</text>
</comment>
<comment type="similarity">
    <text evidence="1">Belongs to the bacterial ribosomal protein bS20 family.</text>
</comment>
<reference key="1">
    <citation type="journal article" date="2008" name="J. Bacteriol.">
        <title>Complete genome sequence of uropathogenic Proteus mirabilis, a master of both adherence and motility.</title>
        <authorList>
            <person name="Pearson M.M."/>
            <person name="Sebaihia M."/>
            <person name="Churcher C."/>
            <person name="Quail M.A."/>
            <person name="Seshasayee A.S."/>
            <person name="Luscombe N.M."/>
            <person name="Abdellah Z."/>
            <person name="Arrosmith C."/>
            <person name="Atkin B."/>
            <person name="Chillingworth T."/>
            <person name="Hauser H."/>
            <person name="Jagels K."/>
            <person name="Moule S."/>
            <person name="Mungall K."/>
            <person name="Norbertczak H."/>
            <person name="Rabbinowitsch E."/>
            <person name="Walker D."/>
            <person name="Whithead S."/>
            <person name="Thomson N.R."/>
            <person name="Rather P.N."/>
            <person name="Parkhill J."/>
            <person name="Mobley H.L.T."/>
        </authorList>
    </citation>
    <scope>NUCLEOTIDE SEQUENCE [LARGE SCALE GENOMIC DNA]</scope>
    <source>
        <strain>HI4320</strain>
    </source>
</reference>
<name>RS20_PROMH</name>
<feature type="chain" id="PRO_1000126496" description="Small ribosomal subunit protein bS20">
    <location>
        <begin position="1"/>
        <end position="86"/>
    </location>
</feature>
<feature type="region of interest" description="Disordered" evidence="2">
    <location>
        <begin position="1"/>
        <end position="28"/>
    </location>
</feature>
<feature type="compositionally biased region" description="Basic residues" evidence="2">
    <location>
        <begin position="1"/>
        <end position="27"/>
    </location>
</feature>
<sequence>MANIKSAKKRAVQSEKRRQHNASRRSMMRTYIKKVYAAVASGDKEAAQKAFNDMQPIVDRQATKGLIHKNKAARHKANLQAQIKAM</sequence>
<organism>
    <name type="scientific">Proteus mirabilis (strain HI4320)</name>
    <dbReference type="NCBI Taxonomy" id="529507"/>
    <lineage>
        <taxon>Bacteria</taxon>
        <taxon>Pseudomonadati</taxon>
        <taxon>Pseudomonadota</taxon>
        <taxon>Gammaproteobacteria</taxon>
        <taxon>Enterobacterales</taxon>
        <taxon>Morganellaceae</taxon>
        <taxon>Proteus</taxon>
    </lineage>
</organism>
<dbReference type="EMBL" id="AM942759">
    <property type="protein sequence ID" value="CAR40253.1"/>
    <property type="molecule type" value="Genomic_DNA"/>
</dbReference>
<dbReference type="RefSeq" id="WP_004248964.1">
    <property type="nucleotide sequence ID" value="NC_010554.1"/>
</dbReference>
<dbReference type="SMR" id="B4F2T3"/>
<dbReference type="EnsemblBacteria" id="CAR40253">
    <property type="protein sequence ID" value="CAR40253"/>
    <property type="gene ID" value="PMI0013"/>
</dbReference>
<dbReference type="GeneID" id="93395489"/>
<dbReference type="KEGG" id="pmr:PMI0013"/>
<dbReference type="eggNOG" id="COG0268">
    <property type="taxonomic scope" value="Bacteria"/>
</dbReference>
<dbReference type="HOGENOM" id="CLU_160655_4_0_6"/>
<dbReference type="Proteomes" id="UP000008319">
    <property type="component" value="Chromosome"/>
</dbReference>
<dbReference type="GO" id="GO:0005829">
    <property type="term" value="C:cytosol"/>
    <property type="evidence" value="ECO:0007669"/>
    <property type="project" value="TreeGrafter"/>
</dbReference>
<dbReference type="GO" id="GO:0015935">
    <property type="term" value="C:small ribosomal subunit"/>
    <property type="evidence" value="ECO:0007669"/>
    <property type="project" value="TreeGrafter"/>
</dbReference>
<dbReference type="GO" id="GO:0070181">
    <property type="term" value="F:small ribosomal subunit rRNA binding"/>
    <property type="evidence" value="ECO:0007669"/>
    <property type="project" value="TreeGrafter"/>
</dbReference>
<dbReference type="GO" id="GO:0003735">
    <property type="term" value="F:structural constituent of ribosome"/>
    <property type="evidence" value="ECO:0007669"/>
    <property type="project" value="InterPro"/>
</dbReference>
<dbReference type="GO" id="GO:0006412">
    <property type="term" value="P:translation"/>
    <property type="evidence" value="ECO:0007669"/>
    <property type="project" value="UniProtKB-UniRule"/>
</dbReference>
<dbReference type="FunFam" id="1.20.58.110:FF:000001">
    <property type="entry name" value="30S ribosomal protein S20"/>
    <property type="match status" value="1"/>
</dbReference>
<dbReference type="Gene3D" id="1.20.58.110">
    <property type="entry name" value="Ribosomal protein S20"/>
    <property type="match status" value="1"/>
</dbReference>
<dbReference type="HAMAP" id="MF_00500">
    <property type="entry name" value="Ribosomal_bS20"/>
    <property type="match status" value="1"/>
</dbReference>
<dbReference type="InterPro" id="IPR002583">
    <property type="entry name" value="Ribosomal_bS20"/>
</dbReference>
<dbReference type="InterPro" id="IPR036510">
    <property type="entry name" value="Ribosomal_bS20_sf"/>
</dbReference>
<dbReference type="NCBIfam" id="TIGR00029">
    <property type="entry name" value="S20"/>
    <property type="match status" value="1"/>
</dbReference>
<dbReference type="PANTHER" id="PTHR33398">
    <property type="entry name" value="30S RIBOSOMAL PROTEIN S20"/>
    <property type="match status" value="1"/>
</dbReference>
<dbReference type="PANTHER" id="PTHR33398:SF1">
    <property type="entry name" value="SMALL RIBOSOMAL SUBUNIT PROTEIN BS20C"/>
    <property type="match status" value="1"/>
</dbReference>
<dbReference type="Pfam" id="PF01649">
    <property type="entry name" value="Ribosomal_S20p"/>
    <property type="match status" value="1"/>
</dbReference>
<dbReference type="SUPFAM" id="SSF46992">
    <property type="entry name" value="Ribosomal protein S20"/>
    <property type="match status" value="1"/>
</dbReference>
<evidence type="ECO:0000255" key="1">
    <source>
        <dbReference type="HAMAP-Rule" id="MF_00500"/>
    </source>
</evidence>
<evidence type="ECO:0000256" key="2">
    <source>
        <dbReference type="SAM" id="MobiDB-lite"/>
    </source>
</evidence>
<evidence type="ECO:0000305" key="3"/>
<accession>B4F2T3</accession>
<proteinExistence type="inferred from homology"/>